<sequence>MSTRVVVGLSGGVDSAVAAYLLKQQGYDVLGVFMKNWDDDDNTEHCTARQDFLDVLAVADVLGIEVEAVNFAAEYKERVFSYFLAEYQAGRTPNPDVLCNAEIKFKAFLDDAIARGADYIATGHYVGKGHDTFGRAALLRARDANKDQSYFLYRLNQAQLSPALFPLARLPKPEVREIARRIGLPNAAKKDSTGICFIGERNFREFLERYLPRDPGDMTTPEGRVVGQHQGLMYYTLGQRQGLGIGGQKGGSDAPWFVAAKDMATNTLVVVQGHDHPLLQRFGVGAGQLSWIAGVAPDPERPYTAKTRYRQTDAACHITTLYDDTLELVFDAPQWAVTPGQSVVLYDGDVCLGGGIIC</sequence>
<evidence type="ECO:0000255" key="1">
    <source>
        <dbReference type="HAMAP-Rule" id="MF_00144"/>
    </source>
</evidence>
<reference key="1">
    <citation type="journal article" date="2006" name="J. Bacteriol.">
        <title>The genome sequence of the obligately chemolithoautotrophic, facultatively anaerobic bacterium Thiobacillus denitrificans.</title>
        <authorList>
            <person name="Beller H.R."/>
            <person name="Chain P.S."/>
            <person name="Letain T.E."/>
            <person name="Chakicherla A."/>
            <person name="Larimer F.W."/>
            <person name="Richardson P.M."/>
            <person name="Coleman M.A."/>
            <person name="Wood A.P."/>
            <person name="Kelly D.P."/>
        </authorList>
    </citation>
    <scope>NUCLEOTIDE SEQUENCE [LARGE SCALE GENOMIC DNA]</scope>
    <source>
        <strain>ATCC 25259 / T1</strain>
    </source>
</reference>
<comment type="function">
    <text evidence="1">Catalyzes the 2-thiolation of uridine at the wobble position (U34) of tRNA, leading to the formation of s(2)U34.</text>
</comment>
<comment type="catalytic activity">
    <reaction evidence="1">
        <text>S-sulfanyl-L-cysteinyl-[protein] + uridine(34) in tRNA + AH2 + ATP = 2-thiouridine(34) in tRNA + L-cysteinyl-[protein] + A + AMP + diphosphate + H(+)</text>
        <dbReference type="Rhea" id="RHEA:47032"/>
        <dbReference type="Rhea" id="RHEA-COMP:10131"/>
        <dbReference type="Rhea" id="RHEA-COMP:11726"/>
        <dbReference type="Rhea" id="RHEA-COMP:11727"/>
        <dbReference type="Rhea" id="RHEA-COMP:11728"/>
        <dbReference type="ChEBI" id="CHEBI:13193"/>
        <dbReference type="ChEBI" id="CHEBI:15378"/>
        <dbReference type="ChEBI" id="CHEBI:17499"/>
        <dbReference type="ChEBI" id="CHEBI:29950"/>
        <dbReference type="ChEBI" id="CHEBI:30616"/>
        <dbReference type="ChEBI" id="CHEBI:33019"/>
        <dbReference type="ChEBI" id="CHEBI:61963"/>
        <dbReference type="ChEBI" id="CHEBI:65315"/>
        <dbReference type="ChEBI" id="CHEBI:87170"/>
        <dbReference type="ChEBI" id="CHEBI:456215"/>
        <dbReference type="EC" id="2.8.1.13"/>
    </reaction>
</comment>
<comment type="subcellular location">
    <subcellularLocation>
        <location evidence="1">Cytoplasm</location>
    </subcellularLocation>
</comment>
<comment type="similarity">
    <text evidence="1">Belongs to the MnmA/TRMU family.</text>
</comment>
<keyword id="KW-0067">ATP-binding</keyword>
<keyword id="KW-0963">Cytoplasm</keyword>
<keyword id="KW-1015">Disulfide bond</keyword>
<keyword id="KW-0547">Nucleotide-binding</keyword>
<keyword id="KW-1185">Reference proteome</keyword>
<keyword id="KW-0694">RNA-binding</keyword>
<keyword id="KW-0808">Transferase</keyword>
<keyword id="KW-0819">tRNA processing</keyword>
<keyword id="KW-0820">tRNA-binding</keyword>
<feature type="chain" id="PRO_0000349848" description="tRNA-specific 2-thiouridylase MnmA">
    <location>
        <begin position="1"/>
        <end position="358"/>
    </location>
</feature>
<feature type="region of interest" description="Interaction with target base in tRNA" evidence="1">
    <location>
        <begin position="94"/>
        <end position="96"/>
    </location>
</feature>
<feature type="region of interest" description="Interaction with tRNA" evidence="1">
    <location>
        <begin position="146"/>
        <end position="148"/>
    </location>
</feature>
<feature type="region of interest" description="Interaction with tRNA" evidence="1">
    <location>
        <begin position="308"/>
        <end position="309"/>
    </location>
</feature>
<feature type="active site" description="Nucleophile" evidence="1">
    <location>
        <position position="99"/>
    </location>
</feature>
<feature type="active site" description="Cysteine persulfide intermediate" evidence="1">
    <location>
        <position position="196"/>
    </location>
</feature>
<feature type="binding site" evidence="1">
    <location>
        <begin position="8"/>
        <end position="15"/>
    </location>
    <ligand>
        <name>ATP</name>
        <dbReference type="ChEBI" id="CHEBI:30616"/>
    </ligand>
</feature>
<feature type="binding site" evidence="1">
    <location>
        <position position="34"/>
    </location>
    <ligand>
        <name>ATP</name>
        <dbReference type="ChEBI" id="CHEBI:30616"/>
    </ligand>
</feature>
<feature type="binding site" evidence="1">
    <location>
        <position position="123"/>
    </location>
    <ligand>
        <name>ATP</name>
        <dbReference type="ChEBI" id="CHEBI:30616"/>
    </ligand>
</feature>
<feature type="site" description="Interaction with tRNA" evidence="1">
    <location>
        <position position="124"/>
    </location>
</feature>
<feature type="site" description="Interaction with tRNA" evidence="1">
    <location>
        <position position="341"/>
    </location>
</feature>
<feature type="disulfide bond" description="Alternate" evidence="1">
    <location>
        <begin position="99"/>
        <end position="196"/>
    </location>
</feature>
<name>MNMA_THIDA</name>
<organism>
    <name type="scientific">Thiobacillus denitrificans (strain ATCC 25259 / T1)</name>
    <dbReference type="NCBI Taxonomy" id="292415"/>
    <lineage>
        <taxon>Bacteria</taxon>
        <taxon>Pseudomonadati</taxon>
        <taxon>Pseudomonadota</taxon>
        <taxon>Betaproteobacteria</taxon>
        <taxon>Nitrosomonadales</taxon>
        <taxon>Thiobacillaceae</taxon>
        <taxon>Thiobacillus</taxon>
    </lineage>
</organism>
<protein>
    <recommendedName>
        <fullName evidence="1">tRNA-specific 2-thiouridylase MnmA</fullName>
        <ecNumber evidence="1">2.8.1.13</ecNumber>
    </recommendedName>
</protein>
<accession>Q3SKH7</accession>
<dbReference type="EC" id="2.8.1.13" evidence="1"/>
<dbReference type="EMBL" id="CP000116">
    <property type="protein sequence ID" value="AAZ96804.1"/>
    <property type="molecule type" value="Genomic_DNA"/>
</dbReference>
<dbReference type="RefSeq" id="WP_011311363.1">
    <property type="nucleotide sequence ID" value="NC_007404.1"/>
</dbReference>
<dbReference type="SMR" id="Q3SKH7"/>
<dbReference type="STRING" id="292415.Tbd_0851"/>
<dbReference type="KEGG" id="tbd:Tbd_0851"/>
<dbReference type="eggNOG" id="COG0482">
    <property type="taxonomic scope" value="Bacteria"/>
</dbReference>
<dbReference type="HOGENOM" id="CLU_035188_1_0_4"/>
<dbReference type="OrthoDB" id="9800696at2"/>
<dbReference type="Proteomes" id="UP000008291">
    <property type="component" value="Chromosome"/>
</dbReference>
<dbReference type="GO" id="GO:0005737">
    <property type="term" value="C:cytoplasm"/>
    <property type="evidence" value="ECO:0007669"/>
    <property type="project" value="UniProtKB-SubCell"/>
</dbReference>
<dbReference type="GO" id="GO:0005524">
    <property type="term" value="F:ATP binding"/>
    <property type="evidence" value="ECO:0007669"/>
    <property type="project" value="UniProtKB-KW"/>
</dbReference>
<dbReference type="GO" id="GO:0000049">
    <property type="term" value="F:tRNA binding"/>
    <property type="evidence" value="ECO:0007669"/>
    <property type="project" value="UniProtKB-KW"/>
</dbReference>
<dbReference type="GO" id="GO:0103016">
    <property type="term" value="F:tRNA-uridine 2-sulfurtransferase activity"/>
    <property type="evidence" value="ECO:0007669"/>
    <property type="project" value="UniProtKB-EC"/>
</dbReference>
<dbReference type="GO" id="GO:0002143">
    <property type="term" value="P:tRNA wobble position uridine thiolation"/>
    <property type="evidence" value="ECO:0007669"/>
    <property type="project" value="TreeGrafter"/>
</dbReference>
<dbReference type="CDD" id="cd01998">
    <property type="entry name" value="MnmA_TRMU-like"/>
    <property type="match status" value="1"/>
</dbReference>
<dbReference type="FunFam" id="2.30.30.280:FF:000001">
    <property type="entry name" value="tRNA-specific 2-thiouridylase MnmA"/>
    <property type="match status" value="1"/>
</dbReference>
<dbReference type="FunFam" id="2.40.30.10:FF:000023">
    <property type="entry name" value="tRNA-specific 2-thiouridylase MnmA"/>
    <property type="match status" value="1"/>
</dbReference>
<dbReference type="FunFam" id="3.40.50.620:FF:000004">
    <property type="entry name" value="tRNA-specific 2-thiouridylase MnmA"/>
    <property type="match status" value="1"/>
</dbReference>
<dbReference type="Gene3D" id="2.30.30.280">
    <property type="entry name" value="Adenine nucleotide alpha hydrolases-like domains"/>
    <property type="match status" value="1"/>
</dbReference>
<dbReference type="Gene3D" id="3.40.50.620">
    <property type="entry name" value="HUPs"/>
    <property type="match status" value="1"/>
</dbReference>
<dbReference type="Gene3D" id="2.40.30.10">
    <property type="entry name" value="Translation factors"/>
    <property type="match status" value="1"/>
</dbReference>
<dbReference type="HAMAP" id="MF_00144">
    <property type="entry name" value="tRNA_thiouridyl_MnmA"/>
    <property type="match status" value="1"/>
</dbReference>
<dbReference type="InterPro" id="IPR004506">
    <property type="entry name" value="MnmA-like"/>
</dbReference>
<dbReference type="InterPro" id="IPR046885">
    <property type="entry name" value="MnmA-like_C"/>
</dbReference>
<dbReference type="InterPro" id="IPR046884">
    <property type="entry name" value="MnmA-like_central"/>
</dbReference>
<dbReference type="InterPro" id="IPR023382">
    <property type="entry name" value="MnmA-like_central_sf"/>
</dbReference>
<dbReference type="InterPro" id="IPR014729">
    <property type="entry name" value="Rossmann-like_a/b/a_fold"/>
</dbReference>
<dbReference type="NCBIfam" id="NF001138">
    <property type="entry name" value="PRK00143.1"/>
    <property type="match status" value="1"/>
</dbReference>
<dbReference type="NCBIfam" id="TIGR00420">
    <property type="entry name" value="trmU"/>
    <property type="match status" value="1"/>
</dbReference>
<dbReference type="PANTHER" id="PTHR11933:SF5">
    <property type="entry name" value="MITOCHONDRIAL TRNA-SPECIFIC 2-THIOURIDYLASE 1"/>
    <property type="match status" value="1"/>
</dbReference>
<dbReference type="PANTHER" id="PTHR11933">
    <property type="entry name" value="TRNA 5-METHYLAMINOMETHYL-2-THIOURIDYLATE -METHYLTRANSFERASE"/>
    <property type="match status" value="1"/>
</dbReference>
<dbReference type="Pfam" id="PF03054">
    <property type="entry name" value="tRNA_Me_trans"/>
    <property type="match status" value="1"/>
</dbReference>
<dbReference type="Pfam" id="PF20258">
    <property type="entry name" value="tRNA_Me_trans_C"/>
    <property type="match status" value="1"/>
</dbReference>
<dbReference type="Pfam" id="PF20259">
    <property type="entry name" value="tRNA_Me_trans_M"/>
    <property type="match status" value="1"/>
</dbReference>
<dbReference type="SUPFAM" id="SSF52402">
    <property type="entry name" value="Adenine nucleotide alpha hydrolases-like"/>
    <property type="match status" value="1"/>
</dbReference>
<gene>
    <name evidence="1" type="primary">mnmA</name>
    <name type="ordered locus">Tbd_0851</name>
</gene>
<proteinExistence type="inferred from homology"/>